<organism>
    <name type="scientific">Arabidopsis thaliana</name>
    <name type="common">Mouse-ear cress</name>
    <dbReference type="NCBI Taxonomy" id="3702"/>
    <lineage>
        <taxon>Eukaryota</taxon>
        <taxon>Viridiplantae</taxon>
        <taxon>Streptophyta</taxon>
        <taxon>Embryophyta</taxon>
        <taxon>Tracheophyta</taxon>
        <taxon>Spermatophyta</taxon>
        <taxon>Magnoliopsida</taxon>
        <taxon>eudicotyledons</taxon>
        <taxon>Gunneridae</taxon>
        <taxon>Pentapetalae</taxon>
        <taxon>rosids</taxon>
        <taxon>malvids</taxon>
        <taxon>Brassicales</taxon>
        <taxon>Brassicaceae</taxon>
        <taxon>Camelineae</taxon>
        <taxon>Arabidopsis</taxon>
    </lineage>
</organism>
<gene>
    <name evidence="8" type="primary">BSK1</name>
    <name evidence="11" type="ordered locus">At4g35230</name>
    <name evidence="12" type="ORF">F23E12.210</name>
</gene>
<dbReference type="EC" id="2.7.11.1" evidence="7"/>
<dbReference type="EMBL" id="AL022604">
    <property type="protein sequence ID" value="CAA18746.1"/>
    <property type="status" value="ALT_SEQ"/>
    <property type="molecule type" value="Genomic_DNA"/>
</dbReference>
<dbReference type="EMBL" id="AL161587">
    <property type="protein sequence ID" value="CAB80240.1"/>
    <property type="status" value="ALT_SEQ"/>
    <property type="molecule type" value="Genomic_DNA"/>
</dbReference>
<dbReference type="EMBL" id="CP002687">
    <property type="protein sequence ID" value="AEE86482.1"/>
    <property type="molecule type" value="Genomic_DNA"/>
</dbReference>
<dbReference type="EMBL" id="AF439824">
    <property type="protein sequence ID" value="AAL27496.1"/>
    <property type="molecule type" value="mRNA"/>
</dbReference>
<dbReference type="EMBL" id="AY142063">
    <property type="protein sequence ID" value="AAM98327.1"/>
    <property type="molecule type" value="mRNA"/>
</dbReference>
<dbReference type="PIR" id="T06134">
    <property type="entry name" value="T06134"/>
</dbReference>
<dbReference type="RefSeq" id="NP_567980.1">
    <property type="nucleotide sequence ID" value="NM_119689.4"/>
</dbReference>
<dbReference type="SMR" id="Q944A7"/>
<dbReference type="BioGRID" id="14958">
    <property type="interactions" value="15"/>
</dbReference>
<dbReference type="FunCoup" id="Q944A7">
    <property type="interactions" value="2725"/>
</dbReference>
<dbReference type="IntAct" id="Q944A7">
    <property type="interactions" value="1"/>
</dbReference>
<dbReference type="STRING" id="3702.Q944A7"/>
<dbReference type="iPTMnet" id="Q944A7"/>
<dbReference type="PaxDb" id="3702-AT4G35230.1"/>
<dbReference type="ProteomicsDB" id="240506"/>
<dbReference type="EnsemblPlants" id="AT4G35230.1">
    <property type="protein sequence ID" value="AT4G35230.1"/>
    <property type="gene ID" value="AT4G35230"/>
</dbReference>
<dbReference type="GeneID" id="829676"/>
<dbReference type="Gramene" id="AT4G35230.1">
    <property type="protein sequence ID" value="AT4G35230.1"/>
    <property type="gene ID" value="AT4G35230"/>
</dbReference>
<dbReference type="KEGG" id="ath:AT4G35230"/>
<dbReference type="Araport" id="AT4G35230"/>
<dbReference type="TAIR" id="AT4G35230">
    <property type="gene designation" value="BSK1"/>
</dbReference>
<dbReference type="eggNOG" id="ENOG502QQT6">
    <property type="taxonomic scope" value="Eukaryota"/>
</dbReference>
<dbReference type="HOGENOM" id="CLU_000288_15_0_1"/>
<dbReference type="InParanoid" id="Q944A7"/>
<dbReference type="OMA" id="AWPEPKQ"/>
<dbReference type="PhylomeDB" id="Q944A7"/>
<dbReference type="PRO" id="PR:Q944A7"/>
<dbReference type="Proteomes" id="UP000006548">
    <property type="component" value="Chromosome 4"/>
</dbReference>
<dbReference type="ExpressionAtlas" id="Q944A7">
    <property type="expression patterns" value="baseline and differential"/>
</dbReference>
<dbReference type="GO" id="GO:0000325">
    <property type="term" value="C:plant-type vacuole"/>
    <property type="evidence" value="ECO:0007005"/>
    <property type="project" value="TAIR"/>
</dbReference>
<dbReference type="GO" id="GO:0005886">
    <property type="term" value="C:plasma membrane"/>
    <property type="evidence" value="ECO:0000314"/>
    <property type="project" value="TAIR"/>
</dbReference>
<dbReference type="GO" id="GO:0009506">
    <property type="term" value="C:plasmodesma"/>
    <property type="evidence" value="ECO:0007005"/>
    <property type="project" value="TAIR"/>
</dbReference>
<dbReference type="GO" id="GO:0005524">
    <property type="term" value="F:ATP binding"/>
    <property type="evidence" value="ECO:0007669"/>
    <property type="project" value="UniProtKB-KW"/>
</dbReference>
<dbReference type="GO" id="GO:0004672">
    <property type="term" value="F:protein kinase activity"/>
    <property type="evidence" value="ECO:0000314"/>
    <property type="project" value="UniProtKB"/>
</dbReference>
<dbReference type="GO" id="GO:0106310">
    <property type="term" value="F:protein serine kinase activity"/>
    <property type="evidence" value="ECO:0007669"/>
    <property type="project" value="RHEA"/>
</dbReference>
<dbReference type="GO" id="GO:0004674">
    <property type="term" value="F:protein serine/threonine kinase activity"/>
    <property type="evidence" value="ECO:0007669"/>
    <property type="project" value="UniProtKB-KW"/>
</dbReference>
<dbReference type="GO" id="GO:0009742">
    <property type="term" value="P:brassinosteroid mediated signaling pathway"/>
    <property type="evidence" value="ECO:0000314"/>
    <property type="project" value="TAIR"/>
</dbReference>
<dbReference type="GO" id="GO:0042742">
    <property type="term" value="P:defense response to bacterium"/>
    <property type="evidence" value="ECO:0000315"/>
    <property type="project" value="UniProtKB"/>
</dbReference>
<dbReference type="GO" id="GO:0050832">
    <property type="term" value="P:defense response to fungus"/>
    <property type="evidence" value="ECO:0000315"/>
    <property type="project" value="UniProtKB"/>
</dbReference>
<dbReference type="FunFam" id="1.25.40.10:FF:000016">
    <property type="entry name" value="probable serine/threonine-protein kinase At4g35230"/>
    <property type="match status" value="1"/>
</dbReference>
<dbReference type="FunFam" id="3.30.200.20:FF:000154">
    <property type="entry name" value="probable serine/threonine-protein kinase At4g35230"/>
    <property type="match status" value="1"/>
</dbReference>
<dbReference type="FunFam" id="1.10.510.10:FF:000069">
    <property type="entry name" value="probable serine/threonine-protein kinase At5g41260"/>
    <property type="match status" value="1"/>
</dbReference>
<dbReference type="Gene3D" id="3.30.200.20">
    <property type="entry name" value="Phosphorylase Kinase, domain 1"/>
    <property type="match status" value="1"/>
</dbReference>
<dbReference type="Gene3D" id="1.25.40.10">
    <property type="entry name" value="Tetratricopeptide repeat domain"/>
    <property type="match status" value="1"/>
</dbReference>
<dbReference type="Gene3D" id="1.10.510.10">
    <property type="entry name" value="Transferase(Phosphotransferase) domain 1"/>
    <property type="match status" value="1"/>
</dbReference>
<dbReference type="InterPro" id="IPR045845">
    <property type="entry name" value="BSK"/>
</dbReference>
<dbReference type="InterPro" id="IPR011009">
    <property type="entry name" value="Kinase-like_dom_sf"/>
</dbReference>
<dbReference type="InterPro" id="IPR000719">
    <property type="entry name" value="Prot_kinase_dom"/>
</dbReference>
<dbReference type="InterPro" id="IPR001245">
    <property type="entry name" value="Ser-Thr/Tyr_kinase_cat_dom"/>
</dbReference>
<dbReference type="InterPro" id="IPR011990">
    <property type="entry name" value="TPR-like_helical_dom_sf"/>
</dbReference>
<dbReference type="PANTHER" id="PTHR45863">
    <property type="entry name" value="SERINE/THREONINE-PROTEIN KINASE BSK5"/>
    <property type="match status" value="1"/>
</dbReference>
<dbReference type="PANTHER" id="PTHR45863:SF22">
    <property type="entry name" value="SERINE_THREONINE-PROTEIN KINASE BSK1"/>
    <property type="match status" value="1"/>
</dbReference>
<dbReference type="Pfam" id="PF07714">
    <property type="entry name" value="PK_Tyr_Ser-Thr"/>
    <property type="match status" value="1"/>
</dbReference>
<dbReference type="SUPFAM" id="SSF56112">
    <property type="entry name" value="Protein kinase-like (PK-like)"/>
    <property type="match status" value="1"/>
</dbReference>
<dbReference type="SUPFAM" id="SSF48452">
    <property type="entry name" value="TPR-like"/>
    <property type="match status" value="1"/>
</dbReference>
<dbReference type="PROSITE" id="PS50011">
    <property type="entry name" value="PROTEIN_KINASE_DOM"/>
    <property type="match status" value="1"/>
</dbReference>
<keyword id="KW-0067">ATP-binding</keyword>
<keyword id="KW-1070">Brassinosteroid signaling pathway</keyword>
<keyword id="KW-1003">Cell membrane</keyword>
<keyword id="KW-0175">Coiled coil</keyword>
<keyword id="KW-0418">Kinase</keyword>
<keyword id="KW-0449">Lipoprotein</keyword>
<keyword id="KW-0472">Membrane</keyword>
<keyword id="KW-0519">Myristate</keyword>
<keyword id="KW-0547">Nucleotide-binding</keyword>
<keyword id="KW-0597">Phosphoprotein</keyword>
<keyword id="KW-0611">Plant defense</keyword>
<keyword id="KW-1185">Reference proteome</keyword>
<keyword id="KW-0723">Serine/threonine-protein kinase</keyword>
<keyword id="KW-0808">Transferase</keyword>
<feature type="initiator methionine" description="Removed" evidence="4">
    <location>
        <position position="1"/>
    </location>
</feature>
<feature type="chain" id="PRO_0000324844" description="Serine/threonine-protein kinase BSK1">
    <location>
        <begin position="2"/>
        <end position="512"/>
    </location>
</feature>
<feature type="domain" description="Protein kinase" evidence="2">
    <location>
        <begin position="76"/>
        <end position="331"/>
    </location>
</feature>
<feature type="region of interest" description="Disordered" evidence="3">
    <location>
        <begin position="8"/>
        <end position="48"/>
    </location>
</feature>
<feature type="coiled-coil region" evidence="1">
    <location>
        <begin position="483"/>
        <end position="508"/>
    </location>
</feature>
<feature type="compositionally biased region" description="Gly residues" evidence="3">
    <location>
        <begin position="38"/>
        <end position="48"/>
    </location>
</feature>
<feature type="active site" description="Proton acceptor" evidence="2">
    <location>
        <position position="198"/>
    </location>
</feature>
<feature type="binding site" evidence="2">
    <location>
        <begin position="82"/>
        <end position="90"/>
    </location>
    <ligand>
        <name>ATP</name>
        <dbReference type="ChEBI" id="CHEBI:30616"/>
    </ligand>
</feature>
<feature type="binding site" evidence="2">
    <location>
        <position position="104"/>
    </location>
    <ligand>
        <name>ATP</name>
        <dbReference type="ChEBI" id="CHEBI:30616"/>
    </ligand>
</feature>
<feature type="site" description="Major phosphorylation site for BRI1" evidence="5">
    <location>
        <position position="230"/>
    </location>
</feature>
<feature type="modified residue" description="Phosphoserine" evidence="5">
    <location>
        <position position="230"/>
    </location>
</feature>
<feature type="lipid moiety-binding region" description="N-myristoyl glycine" evidence="4">
    <location>
        <position position="2"/>
    </location>
</feature>
<feature type="mutagenesis site" description="Abolishes plasma membrane localization; enhances susceptibility to fungal and bacterial pathogens." evidence="7">
    <original>G</original>
    <variation>A</variation>
    <location>
        <position position="2"/>
    </location>
</feature>
<feature type="mutagenesis site" description="Abolishes kinase activity; enhances susceptibility to fungal and bacterial pathogens." evidence="7">
    <original>K</original>
    <variation>E</variation>
    <location>
        <position position="104"/>
    </location>
</feature>
<feature type="mutagenesis site" description="Reduces protein phosphorylation 5-fold." evidence="5">
    <original>S</original>
    <variation>A</variation>
    <location>
        <position position="230"/>
    </location>
</feature>
<feature type="mutagenesis site" description="In bsk1-1; enhances susceptibility to fungal and bacterial pathogens." evidence="7">
    <original>R</original>
    <variation>Q</variation>
    <location>
        <position position="443"/>
    </location>
</feature>
<proteinExistence type="evidence at protein level"/>
<comment type="function">
    <text evidence="5 7">Serine/threonine kinase that acts as a positive regulator of brassinosteroid (BR) signaling downstream of the receptor kinase BRI1. Mediates signal transduction from BRI1 by functioning as substrate of BRI1 (PubMed:18653891). Functions as a positive regulator of plant immunity. May be involved in the regulation of pattern-triggered immunity (PTI) downstream of the flagellin receptor FLS2. Possesses kinase activity in vitro. Kinase activity is required for its function in innate immunity (PubMed:23532072).</text>
</comment>
<comment type="catalytic activity">
    <reaction evidence="7">
        <text>L-seryl-[protein] + ATP = O-phospho-L-seryl-[protein] + ADP + H(+)</text>
        <dbReference type="Rhea" id="RHEA:17989"/>
        <dbReference type="Rhea" id="RHEA-COMP:9863"/>
        <dbReference type="Rhea" id="RHEA-COMP:11604"/>
        <dbReference type="ChEBI" id="CHEBI:15378"/>
        <dbReference type="ChEBI" id="CHEBI:29999"/>
        <dbReference type="ChEBI" id="CHEBI:30616"/>
        <dbReference type="ChEBI" id="CHEBI:83421"/>
        <dbReference type="ChEBI" id="CHEBI:456216"/>
        <dbReference type="EC" id="2.7.11.1"/>
    </reaction>
</comment>
<comment type="catalytic activity">
    <reaction evidence="7">
        <text>L-threonyl-[protein] + ATP = O-phospho-L-threonyl-[protein] + ADP + H(+)</text>
        <dbReference type="Rhea" id="RHEA:46608"/>
        <dbReference type="Rhea" id="RHEA-COMP:11060"/>
        <dbReference type="Rhea" id="RHEA-COMP:11605"/>
        <dbReference type="ChEBI" id="CHEBI:15378"/>
        <dbReference type="ChEBI" id="CHEBI:30013"/>
        <dbReference type="ChEBI" id="CHEBI:30616"/>
        <dbReference type="ChEBI" id="CHEBI:61977"/>
        <dbReference type="ChEBI" id="CHEBI:456216"/>
        <dbReference type="EC" id="2.7.11.1"/>
    </reaction>
</comment>
<comment type="subunit">
    <text evidence="5 6 7">Interacts with BRI1 (PubMed:18653891, PubMed:23496207). Interacts with ASK7/BIN2, BSK5, BSK6, BSK8 and BSK11 (PubMed:23496207). Interacts with FLS2 (PubMed:23532072).</text>
</comment>
<comment type="interaction">
    <interactant intactId="EBI-1797846">
        <id>Q944A7</id>
    </interactant>
    <interactant intactId="EBI-1797828">
        <id>O22476</id>
        <label>BRI1</label>
    </interactant>
    <organismsDiffer>false</organismsDiffer>
    <experiments>4</experiments>
</comment>
<comment type="subcellular location">
    <subcellularLocation>
        <location evidence="5 7">Cell membrane</location>
        <topology evidence="7 10">Lipid-anchor</topology>
    </subcellularLocation>
    <text evidence="7">Plasma membrane localization is required for its function in innate immunity.</text>
</comment>
<comment type="PTM">
    <text evidence="5 6">Phosphorylated at Ser-230 by BRI1 upon brassinolide (BL) treatment. Phosphorylation at Ser-230 weakens the interaction between BSK1 and BRI1 (PubMed:18653891). Phosphorylated by ASK7/BIN2 and ASK9/BIL2 (PubMed:23496207).</text>
</comment>
<comment type="similarity">
    <text evidence="9">Belongs to the protein kinase superfamily. Ser/Thr protein kinase family.</text>
</comment>
<comment type="sequence caution" evidence="9">
    <conflict type="erroneous gene model prediction">
        <sequence resource="EMBL-CDS" id="CAA18746"/>
    </conflict>
</comment>
<comment type="sequence caution" evidence="9">
    <conflict type="erroneous gene model prediction">
        <sequence resource="EMBL-CDS" id="CAB80240"/>
    </conflict>
</comment>
<sequence length="512" mass="56818">MGCCQSLFSGDNPLGKDGVQPQPLSQNNHGGATTADNGGSGGASGVGGGGGGGGIPSFSEFSFADLKAATNNFSSDNIVSESGEKAPNLVYKGRLQNRRWIAVKKFTKMAWPEPKQFAEEAWGVGKLRHNRLANLIGYCCDGDERLLVAEFMPNDTLAKHLFHWENQTIEWAMRLRVGYYIAEALDYCSTEGRPLYHDLNAYRVLFDEDGDPRLSCFGLMKNSRDGKSYSTNLAYTPPEYLRNGRVTPESVTYSFGTVLLDLLSGKHIPPSHALDMIRGKNIILLMDSHLEGKFSTEEATVVVELASQCLQYEPRERPNTKDLVATLAPLQTKSDVPSYVMLGIKKQEEAPSTPQRPLSPLGEACSRMDLTAIHQILVMTHYRDDEGTNELSFQEWTQQMKDMLDARKRGDQSFREKDFKTAIDCYSQFIDVGTMVSPTVFGRRSLCYLLCDQPDAALRDAMQAQCVYPDWPTAFYMQSVALAKLNMNTDAADMLNEAAQLEEKRQRGGRGS</sequence>
<reference key="1">
    <citation type="journal article" date="1999" name="Nature">
        <title>Sequence and analysis of chromosome 4 of the plant Arabidopsis thaliana.</title>
        <authorList>
            <person name="Mayer K.F.X."/>
            <person name="Schueller C."/>
            <person name="Wambutt R."/>
            <person name="Murphy G."/>
            <person name="Volckaert G."/>
            <person name="Pohl T."/>
            <person name="Duesterhoeft A."/>
            <person name="Stiekema W."/>
            <person name="Entian K.-D."/>
            <person name="Terryn N."/>
            <person name="Harris B."/>
            <person name="Ansorge W."/>
            <person name="Brandt P."/>
            <person name="Grivell L.A."/>
            <person name="Rieger M."/>
            <person name="Weichselgartner M."/>
            <person name="de Simone V."/>
            <person name="Obermaier B."/>
            <person name="Mache R."/>
            <person name="Mueller M."/>
            <person name="Kreis M."/>
            <person name="Delseny M."/>
            <person name="Puigdomenech P."/>
            <person name="Watson M."/>
            <person name="Schmidtheini T."/>
            <person name="Reichert B."/>
            <person name="Portetelle D."/>
            <person name="Perez-Alonso M."/>
            <person name="Boutry M."/>
            <person name="Bancroft I."/>
            <person name="Vos P."/>
            <person name="Hoheisel J."/>
            <person name="Zimmermann W."/>
            <person name="Wedler H."/>
            <person name="Ridley P."/>
            <person name="Langham S.-A."/>
            <person name="McCullagh B."/>
            <person name="Bilham L."/>
            <person name="Robben J."/>
            <person name="van der Schueren J."/>
            <person name="Grymonprez B."/>
            <person name="Chuang Y.-J."/>
            <person name="Vandenbussche F."/>
            <person name="Braeken M."/>
            <person name="Weltjens I."/>
            <person name="Voet M."/>
            <person name="Bastiaens I."/>
            <person name="Aert R."/>
            <person name="Defoor E."/>
            <person name="Weitzenegger T."/>
            <person name="Bothe G."/>
            <person name="Ramsperger U."/>
            <person name="Hilbert H."/>
            <person name="Braun M."/>
            <person name="Holzer E."/>
            <person name="Brandt A."/>
            <person name="Peters S."/>
            <person name="van Staveren M."/>
            <person name="Dirkse W."/>
            <person name="Mooijman P."/>
            <person name="Klein Lankhorst R."/>
            <person name="Rose M."/>
            <person name="Hauf J."/>
            <person name="Koetter P."/>
            <person name="Berneiser S."/>
            <person name="Hempel S."/>
            <person name="Feldpausch M."/>
            <person name="Lamberth S."/>
            <person name="Van den Daele H."/>
            <person name="De Keyser A."/>
            <person name="Buysshaert C."/>
            <person name="Gielen J."/>
            <person name="Villarroel R."/>
            <person name="De Clercq R."/>
            <person name="van Montagu M."/>
            <person name="Rogers J."/>
            <person name="Cronin A."/>
            <person name="Quail M.A."/>
            <person name="Bray-Allen S."/>
            <person name="Clark L."/>
            <person name="Doggett J."/>
            <person name="Hall S."/>
            <person name="Kay M."/>
            <person name="Lennard N."/>
            <person name="McLay K."/>
            <person name="Mayes R."/>
            <person name="Pettett A."/>
            <person name="Rajandream M.A."/>
            <person name="Lyne M."/>
            <person name="Benes V."/>
            <person name="Rechmann S."/>
            <person name="Borkova D."/>
            <person name="Bloecker H."/>
            <person name="Scharfe M."/>
            <person name="Grimm M."/>
            <person name="Loehnert T.-H."/>
            <person name="Dose S."/>
            <person name="de Haan M."/>
            <person name="Maarse A.C."/>
            <person name="Schaefer M."/>
            <person name="Mueller-Auer S."/>
            <person name="Gabel C."/>
            <person name="Fuchs M."/>
            <person name="Fartmann B."/>
            <person name="Granderath K."/>
            <person name="Dauner D."/>
            <person name="Herzl A."/>
            <person name="Neumann S."/>
            <person name="Argiriou A."/>
            <person name="Vitale D."/>
            <person name="Liguori R."/>
            <person name="Piravandi E."/>
            <person name="Massenet O."/>
            <person name="Quigley F."/>
            <person name="Clabauld G."/>
            <person name="Muendlein A."/>
            <person name="Felber R."/>
            <person name="Schnabl S."/>
            <person name="Hiller R."/>
            <person name="Schmidt W."/>
            <person name="Lecharny A."/>
            <person name="Aubourg S."/>
            <person name="Chefdor F."/>
            <person name="Cooke R."/>
            <person name="Berger C."/>
            <person name="Monfort A."/>
            <person name="Casacuberta E."/>
            <person name="Gibbons T."/>
            <person name="Weber N."/>
            <person name="Vandenbol M."/>
            <person name="Bargues M."/>
            <person name="Terol J."/>
            <person name="Torres A."/>
            <person name="Perez-Perez A."/>
            <person name="Purnelle B."/>
            <person name="Bent E."/>
            <person name="Johnson S."/>
            <person name="Tacon D."/>
            <person name="Jesse T."/>
            <person name="Heijnen L."/>
            <person name="Schwarz S."/>
            <person name="Scholler P."/>
            <person name="Heber S."/>
            <person name="Francs P."/>
            <person name="Bielke C."/>
            <person name="Frishman D."/>
            <person name="Haase D."/>
            <person name="Lemcke K."/>
            <person name="Mewes H.-W."/>
            <person name="Stocker S."/>
            <person name="Zaccaria P."/>
            <person name="Bevan M."/>
            <person name="Wilson R.K."/>
            <person name="de la Bastide M."/>
            <person name="Habermann K."/>
            <person name="Parnell L."/>
            <person name="Dedhia N."/>
            <person name="Gnoj L."/>
            <person name="Schutz K."/>
            <person name="Huang E."/>
            <person name="Spiegel L."/>
            <person name="Sekhon M."/>
            <person name="Murray J."/>
            <person name="Sheet P."/>
            <person name="Cordes M."/>
            <person name="Abu-Threideh J."/>
            <person name="Stoneking T."/>
            <person name="Kalicki J."/>
            <person name="Graves T."/>
            <person name="Harmon G."/>
            <person name="Edwards J."/>
            <person name="Latreille P."/>
            <person name="Courtney L."/>
            <person name="Cloud J."/>
            <person name="Abbott A."/>
            <person name="Scott K."/>
            <person name="Johnson D."/>
            <person name="Minx P."/>
            <person name="Bentley D."/>
            <person name="Fulton B."/>
            <person name="Miller N."/>
            <person name="Greco T."/>
            <person name="Kemp K."/>
            <person name="Kramer J."/>
            <person name="Fulton L."/>
            <person name="Mardis E."/>
            <person name="Dante M."/>
            <person name="Pepin K."/>
            <person name="Hillier L.W."/>
            <person name="Nelson J."/>
            <person name="Spieth J."/>
            <person name="Ryan E."/>
            <person name="Andrews S."/>
            <person name="Geisel C."/>
            <person name="Layman D."/>
            <person name="Du H."/>
            <person name="Ali J."/>
            <person name="Berghoff A."/>
            <person name="Jones K."/>
            <person name="Drone K."/>
            <person name="Cotton M."/>
            <person name="Joshu C."/>
            <person name="Antonoiu B."/>
            <person name="Zidanic M."/>
            <person name="Strong C."/>
            <person name="Sun H."/>
            <person name="Lamar B."/>
            <person name="Yordan C."/>
            <person name="Ma P."/>
            <person name="Zhong J."/>
            <person name="Preston R."/>
            <person name="Vil D."/>
            <person name="Shekher M."/>
            <person name="Matero A."/>
            <person name="Shah R."/>
            <person name="Swaby I.K."/>
            <person name="O'Shaughnessy A."/>
            <person name="Rodriguez M."/>
            <person name="Hoffman J."/>
            <person name="Till S."/>
            <person name="Granat S."/>
            <person name="Shohdy N."/>
            <person name="Hasegawa A."/>
            <person name="Hameed A."/>
            <person name="Lodhi M."/>
            <person name="Johnson A."/>
            <person name="Chen E."/>
            <person name="Marra M.A."/>
            <person name="Martienssen R."/>
            <person name="McCombie W.R."/>
        </authorList>
    </citation>
    <scope>NUCLEOTIDE SEQUENCE [LARGE SCALE GENOMIC DNA]</scope>
    <source>
        <strain>cv. Columbia</strain>
    </source>
</reference>
<reference key="2">
    <citation type="journal article" date="2017" name="Plant J.">
        <title>Araport11: a complete reannotation of the Arabidopsis thaliana reference genome.</title>
        <authorList>
            <person name="Cheng C.Y."/>
            <person name="Krishnakumar V."/>
            <person name="Chan A.P."/>
            <person name="Thibaud-Nissen F."/>
            <person name="Schobel S."/>
            <person name="Town C.D."/>
        </authorList>
    </citation>
    <scope>GENOME REANNOTATION</scope>
    <source>
        <strain>cv. Columbia</strain>
    </source>
</reference>
<reference key="3">
    <citation type="journal article" date="2003" name="Science">
        <title>Empirical analysis of transcriptional activity in the Arabidopsis genome.</title>
        <authorList>
            <person name="Yamada K."/>
            <person name="Lim J."/>
            <person name="Dale J.M."/>
            <person name="Chen H."/>
            <person name="Shinn P."/>
            <person name="Palm C.J."/>
            <person name="Southwick A.M."/>
            <person name="Wu H.C."/>
            <person name="Kim C.J."/>
            <person name="Nguyen M."/>
            <person name="Pham P.K."/>
            <person name="Cheuk R.F."/>
            <person name="Karlin-Newmann G."/>
            <person name="Liu S.X."/>
            <person name="Lam B."/>
            <person name="Sakano H."/>
            <person name="Wu T."/>
            <person name="Yu G."/>
            <person name="Miranda M."/>
            <person name="Quach H.L."/>
            <person name="Tripp M."/>
            <person name="Chang C.H."/>
            <person name="Lee J.M."/>
            <person name="Toriumi M.J."/>
            <person name="Chan M.M."/>
            <person name="Tang C.C."/>
            <person name="Onodera C.S."/>
            <person name="Deng J.M."/>
            <person name="Akiyama K."/>
            <person name="Ansari Y."/>
            <person name="Arakawa T."/>
            <person name="Banh J."/>
            <person name="Banno F."/>
            <person name="Bowser L."/>
            <person name="Brooks S.Y."/>
            <person name="Carninci P."/>
            <person name="Chao Q."/>
            <person name="Choy N."/>
            <person name="Enju A."/>
            <person name="Goldsmith A.D."/>
            <person name="Gurjal M."/>
            <person name="Hansen N.F."/>
            <person name="Hayashizaki Y."/>
            <person name="Johnson-Hopson C."/>
            <person name="Hsuan V.W."/>
            <person name="Iida K."/>
            <person name="Karnes M."/>
            <person name="Khan S."/>
            <person name="Koesema E."/>
            <person name="Ishida J."/>
            <person name="Jiang P.X."/>
            <person name="Jones T."/>
            <person name="Kawai J."/>
            <person name="Kamiya A."/>
            <person name="Meyers C."/>
            <person name="Nakajima M."/>
            <person name="Narusaka M."/>
            <person name="Seki M."/>
            <person name="Sakurai T."/>
            <person name="Satou M."/>
            <person name="Tamse R."/>
            <person name="Vaysberg M."/>
            <person name="Wallender E.K."/>
            <person name="Wong C."/>
            <person name="Yamamura Y."/>
            <person name="Yuan S."/>
            <person name="Shinozaki K."/>
            <person name="Davis R.W."/>
            <person name="Theologis A."/>
            <person name="Ecker J.R."/>
        </authorList>
    </citation>
    <scope>NUCLEOTIDE SEQUENCE [LARGE SCALE MRNA]</scope>
    <source>
        <strain>cv. Columbia</strain>
    </source>
</reference>
<reference key="4">
    <citation type="journal article" date="2003" name="J. Biol. Chem.">
        <title>Unexpected protein families including cell defense components feature in the N-myristoylome of a higher eukaryote.</title>
        <authorList>
            <person name="Boisson B."/>
            <person name="Giglione C."/>
            <person name="Meinnel T."/>
        </authorList>
    </citation>
    <scope>MYRISTOYLATION AT GLY-2</scope>
</reference>
<reference key="5">
    <citation type="journal article" date="2004" name="Plant Cell">
        <title>Phosphoproteomics of the Arabidopsis plasma membrane and a new phosphorylation site database.</title>
        <authorList>
            <person name="Nuehse T.S."/>
            <person name="Stensballe A."/>
            <person name="Jensen O.N."/>
            <person name="Peck S.C."/>
        </authorList>
    </citation>
    <scope>IDENTIFICATION BY MASS SPECTROMETRY [LARGE SCALE ANALYSIS]</scope>
</reference>
<reference key="6">
    <citation type="journal article" date="2007" name="Mol. Cell. Proteomics">
        <title>Temporal analysis of sucrose-induced phosphorylation changes in plasma membrane proteins of Arabidopsis.</title>
        <authorList>
            <person name="Niittylae T."/>
            <person name="Fuglsang A.T."/>
            <person name="Palmgren M.G."/>
            <person name="Frommer W.B."/>
            <person name="Schulze W.X."/>
        </authorList>
    </citation>
    <scope>IDENTIFICATION BY MASS SPECTROMETRY [LARGE SCALE ANALYSIS]</scope>
    <source>
        <tissue>Seedling</tissue>
    </source>
</reference>
<reference key="7">
    <citation type="journal article" date="2008" name="Science">
        <title>BSKs mediate signal transduction from the receptor kinase BRI1 in Arabidopsis.</title>
        <authorList>
            <person name="Tang W."/>
            <person name="Kim T.W."/>
            <person name="Oses-Prieto J.A."/>
            <person name="Sun Y."/>
            <person name="Deng Z."/>
            <person name="Zhu S."/>
            <person name="Wang R."/>
            <person name="Burlingame A.L."/>
            <person name="Wang Z.Y."/>
        </authorList>
    </citation>
    <scope>IDENTIFICATION BY MASS SPECTROMETRY</scope>
    <scope>FUNCTION</scope>
    <scope>INTERACTION WITH BRI1</scope>
    <scope>SUBCELLULAR LOCATION</scope>
    <scope>PHOSPHORYLATION AT SER-230</scope>
    <scope>MUTAGENESIS OF SER-230</scope>
</reference>
<reference key="8">
    <citation type="journal article" date="2009" name="Plant Physiol.">
        <title>Large-scale Arabidopsis phosphoproteome profiling reveals novel chloroplast kinase substrates and phosphorylation networks.</title>
        <authorList>
            <person name="Reiland S."/>
            <person name="Messerli G."/>
            <person name="Baerenfaller K."/>
            <person name="Gerrits B."/>
            <person name="Endler A."/>
            <person name="Grossmann J."/>
            <person name="Gruissem W."/>
            <person name="Baginsky S."/>
        </authorList>
    </citation>
    <scope>IDENTIFICATION BY MASS SPECTROMETRY [LARGE SCALE ANALYSIS]</scope>
</reference>
<reference key="9">
    <citation type="journal article" date="2013" name="Plant Cell">
        <title>BR-SIGNALING KINASE1 physically associates with FLAGELLIN SENSING2 and regulates plant innate immunity in Arabidopsis.</title>
        <authorList>
            <person name="Shi H."/>
            <person name="Shen Q."/>
            <person name="Qi Y."/>
            <person name="Yan H."/>
            <person name="Nie H."/>
            <person name="Chen Y."/>
            <person name="Zhao T."/>
            <person name="Katagiri F."/>
            <person name="Tang D."/>
        </authorList>
    </citation>
    <scope>FUNCTION</scope>
    <scope>CATALYTIC ACTIVITY</scope>
    <scope>INTERACTION WITH FLS2</scope>
    <scope>SUBCELLULAR LOCATION</scope>
    <scope>MUTAGENESIS OF GLY-2; LYS-104 AND ARG-443</scope>
</reference>
<reference key="10">
    <citation type="journal article" date="2013" name="Plant J.">
        <title>BSKs are partially redundant positive regulators of brassinosteroid signaling in Arabidopsis.</title>
        <authorList>
            <person name="Sreeramulu S."/>
            <person name="Mostizky Y."/>
            <person name="Sunitha S."/>
            <person name="Shani E."/>
            <person name="Nahum H."/>
            <person name="Salomon D."/>
            <person name="Hayun L.B."/>
            <person name="Gruetter C."/>
            <person name="Rauh D."/>
            <person name="Ori N."/>
            <person name="Sessa G."/>
        </authorList>
    </citation>
    <scope>INTERACTION WITH BRI1; ASK7/BIN2; BSK5; BSK6; BSK8 AND BSK11</scope>
    <scope>PHOSPHORYLATION</scope>
</reference>
<protein>
    <recommendedName>
        <fullName evidence="9">Serine/threonine-protein kinase BSK1</fullName>
        <ecNumber evidence="7">2.7.11.1</ecNumber>
    </recommendedName>
    <alternativeName>
        <fullName evidence="8">Brassinosteroid-signaling kinase 1</fullName>
    </alternativeName>
</protein>
<accession>Q944A7</accession>
<accession>O65504</accession>
<evidence type="ECO:0000255" key="1"/>
<evidence type="ECO:0000255" key="2">
    <source>
        <dbReference type="PROSITE-ProRule" id="PRU00159"/>
    </source>
</evidence>
<evidence type="ECO:0000256" key="3">
    <source>
        <dbReference type="SAM" id="MobiDB-lite"/>
    </source>
</evidence>
<evidence type="ECO:0000269" key="4">
    <source>
    </source>
</evidence>
<evidence type="ECO:0000269" key="5">
    <source>
    </source>
</evidence>
<evidence type="ECO:0000269" key="6">
    <source>
    </source>
</evidence>
<evidence type="ECO:0000269" key="7">
    <source>
    </source>
</evidence>
<evidence type="ECO:0000303" key="8">
    <source>
    </source>
</evidence>
<evidence type="ECO:0000305" key="9"/>
<evidence type="ECO:0000305" key="10">
    <source>
    </source>
</evidence>
<evidence type="ECO:0000312" key="11">
    <source>
        <dbReference type="Araport" id="AT4G35230"/>
    </source>
</evidence>
<evidence type="ECO:0000312" key="12">
    <source>
        <dbReference type="EMBL" id="CAA18746.1"/>
    </source>
</evidence>
<name>BSK1_ARATH</name>